<proteinExistence type="inferred from homology"/>
<name>PYRE_NITEU</name>
<organism>
    <name type="scientific">Nitrosomonas europaea (strain ATCC 19718 / CIP 103999 / KCTC 2705 / NBRC 14298)</name>
    <dbReference type="NCBI Taxonomy" id="228410"/>
    <lineage>
        <taxon>Bacteria</taxon>
        <taxon>Pseudomonadati</taxon>
        <taxon>Pseudomonadota</taxon>
        <taxon>Betaproteobacteria</taxon>
        <taxon>Nitrosomonadales</taxon>
        <taxon>Nitrosomonadaceae</taxon>
        <taxon>Nitrosomonas</taxon>
    </lineage>
</organism>
<comment type="function">
    <text evidence="1">Catalyzes the transfer of a ribosyl phosphate group from 5-phosphoribose 1-diphosphate to orotate, leading to the formation of orotidine monophosphate (OMP).</text>
</comment>
<comment type="catalytic activity">
    <reaction evidence="1">
        <text>orotidine 5'-phosphate + diphosphate = orotate + 5-phospho-alpha-D-ribose 1-diphosphate</text>
        <dbReference type="Rhea" id="RHEA:10380"/>
        <dbReference type="ChEBI" id="CHEBI:30839"/>
        <dbReference type="ChEBI" id="CHEBI:33019"/>
        <dbReference type="ChEBI" id="CHEBI:57538"/>
        <dbReference type="ChEBI" id="CHEBI:58017"/>
        <dbReference type="EC" id="2.4.2.10"/>
    </reaction>
</comment>
<comment type="cofactor">
    <cofactor evidence="1">
        <name>Mg(2+)</name>
        <dbReference type="ChEBI" id="CHEBI:18420"/>
    </cofactor>
</comment>
<comment type="pathway">
    <text evidence="1">Pyrimidine metabolism; UMP biosynthesis via de novo pathway; UMP from orotate: step 1/2.</text>
</comment>
<comment type="subunit">
    <text evidence="1">Homodimer.</text>
</comment>
<comment type="similarity">
    <text evidence="1">Belongs to the purine/pyrimidine phosphoribosyltransferase family. PyrE subfamily.</text>
</comment>
<evidence type="ECO:0000255" key="1">
    <source>
        <dbReference type="HAMAP-Rule" id="MF_01208"/>
    </source>
</evidence>
<protein>
    <recommendedName>
        <fullName evidence="1">Orotate phosphoribosyltransferase</fullName>
        <shortName evidence="1">OPRT</shortName>
        <shortName evidence="1">OPRTase</shortName>
        <ecNumber evidence="1">2.4.2.10</ecNumber>
    </recommendedName>
</protein>
<keyword id="KW-0328">Glycosyltransferase</keyword>
<keyword id="KW-0460">Magnesium</keyword>
<keyword id="KW-0665">Pyrimidine biosynthesis</keyword>
<keyword id="KW-1185">Reference proteome</keyword>
<keyword id="KW-0808">Transferase</keyword>
<sequence length="227" mass="24833">MSDFQWRFIDFALQYDVLRFGNFRTKAGRPSPYFFNAGLFNDGFALKQLGQFYAQAILASGIRFDALFGPAYKGIPLVSTIAIALAEAGHNHPFSFNRKEIKDHGEGGDIVGAPLAGRILIVDDVVSAGLSVGESITLIHAAGATPCGIMVALDRMEKGKSECSTLQEIKNKYDIPVISLITLDDIIAYLHTRQDLVHHIPAIETYRTFYGAKVPDTVNHTGRSTSV</sequence>
<accession>Q820K1</accession>
<gene>
    <name evidence="1" type="primary">pyrE</name>
    <name type="ordered locus">NE1734</name>
</gene>
<dbReference type="EC" id="2.4.2.10" evidence="1"/>
<dbReference type="EMBL" id="AL954747">
    <property type="protein sequence ID" value="CAD85645.1"/>
    <property type="molecule type" value="Genomic_DNA"/>
</dbReference>
<dbReference type="RefSeq" id="WP_011112288.1">
    <property type="nucleotide sequence ID" value="NC_004757.1"/>
</dbReference>
<dbReference type="SMR" id="Q820K1"/>
<dbReference type="STRING" id="228410.NE1734"/>
<dbReference type="GeneID" id="87104895"/>
<dbReference type="KEGG" id="neu:NE1734"/>
<dbReference type="eggNOG" id="COG0461">
    <property type="taxonomic scope" value="Bacteria"/>
</dbReference>
<dbReference type="HOGENOM" id="CLU_074878_0_1_4"/>
<dbReference type="OrthoDB" id="9779060at2"/>
<dbReference type="PhylomeDB" id="Q820K1"/>
<dbReference type="UniPathway" id="UPA00070">
    <property type="reaction ID" value="UER00119"/>
</dbReference>
<dbReference type="Proteomes" id="UP000001416">
    <property type="component" value="Chromosome"/>
</dbReference>
<dbReference type="GO" id="GO:0005737">
    <property type="term" value="C:cytoplasm"/>
    <property type="evidence" value="ECO:0007669"/>
    <property type="project" value="TreeGrafter"/>
</dbReference>
<dbReference type="GO" id="GO:0000287">
    <property type="term" value="F:magnesium ion binding"/>
    <property type="evidence" value="ECO:0007669"/>
    <property type="project" value="UniProtKB-UniRule"/>
</dbReference>
<dbReference type="GO" id="GO:0004588">
    <property type="term" value="F:orotate phosphoribosyltransferase activity"/>
    <property type="evidence" value="ECO:0007669"/>
    <property type="project" value="UniProtKB-UniRule"/>
</dbReference>
<dbReference type="GO" id="GO:0006207">
    <property type="term" value="P:'de novo' pyrimidine nucleobase biosynthetic process"/>
    <property type="evidence" value="ECO:0007669"/>
    <property type="project" value="TreeGrafter"/>
</dbReference>
<dbReference type="GO" id="GO:0044205">
    <property type="term" value="P:'de novo' UMP biosynthetic process"/>
    <property type="evidence" value="ECO:0007669"/>
    <property type="project" value="UniProtKB-UniRule"/>
</dbReference>
<dbReference type="GO" id="GO:0046132">
    <property type="term" value="P:pyrimidine ribonucleoside biosynthetic process"/>
    <property type="evidence" value="ECO:0007669"/>
    <property type="project" value="TreeGrafter"/>
</dbReference>
<dbReference type="CDD" id="cd06223">
    <property type="entry name" value="PRTases_typeI"/>
    <property type="match status" value="1"/>
</dbReference>
<dbReference type="FunFam" id="3.40.50.2020:FF:000008">
    <property type="entry name" value="Orotate phosphoribosyltransferase"/>
    <property type="match status" value="1"/>
</dbReference>
<dbReference type="Gene3D" id="3.40.50.2020">
    <property type="match status" value="1"/>
</dbReference>
<dbReference type="HAMAP" id="MF_01208">
    <property type="entry name" value="PyrE"/>
    <property type="match status" value="1"/>
</dbReference>
<dbReference type="InterPro" id="IPR023031">
    <property type="entry name" value="OPRT"/>
</dbReference>
<dbReference type="InterPro" id="IPR004467">
    <property type="entry name" value="Or_phspho_trans_dom"/>
</dbReference>
<dbReference type="InterPro" id="IPR000836">
    <property type="entry name" value="PRibTrfase_dom"/>
</dbReference>
<dbReference type="InterPro" id="IPR029057">
    <property type="entry name" value="PRTase-like"/>
</dbReference>
<dbReference type="NCBIfam" id="TIGR00336">
    <property type="entry name" value="pyrE"/>
    <property type="match status" value="1"/>
</dbReference>
<dbReference type="PANTHER" id="PTHR46683">
    <property type="entry name" value="OROTATE PHOSPHORIBOSYLTRANSFERASE 1-RELATED"/>
    <property type="match status" value="1"/>
</dbReference>
<dbReference type="PANTHER" id="PTHR46683:SF1">
    <property type="entry name" value="OROTATE PHOSPHORIBOSYLTRANSFERASE 1-RELATED"/>
    <property type="match status" value="1"/>
</dbReference>
<dbReference type="Pfam" id="PF00156">
    <property type="entry name" value="Pribosyltran"/>
    <property type="match status" value="1"/>
</dbReference>
<dbReference type="SUPFAM" id="SSF53271">
    <property type="entry name" value="PRTase-like"/>
    <property type="match status" value="1"/>
</dbReference>
<dbReference type="PROSITE" id="PS00103">
    <property type="entry name" value="PUR_PYR_PR_TRANSFER"/>
    <property type="match status" value="1"/>
</dbReference>
<feature type="chain" id="PRO_0000110716" description="Orotate phosphoribosyltransferase">
    <location>
        <begin position="1"/>
        <end position="227"/>
    </location>
</feature>
<feature type="binding site" description="in other chain" evidence="1">
    <location>
        <position position="26"/>
    </location>
    <ligand>
        <name>5-phospho-alpha-D-ribose 1-diphosphate</name>
        <dbReference type="ChEBI" id="CHEBI:58017"/>
        <note>ligand shared between dimeric partners</note>
    </ligand>
</feature>
<feature type="binding site" evidence="1">
    <location>
        <begin position="34"/>
        <end position="35"/>
    </location>
    <ligand>
        <name>orotate</name>
        <dbReference type="ChEBI" id="CHEBI:30839"/>
    </ligand>
</feature>
<feature type="binding site" description="in other chain" evidence="1">
    <location>
        <begin position="72"/>
        <end position="73"/>
    </location>
    <ligand>
        <name>5-phospho-alpha-D-ribose 1-diphosphate</name>
        <dbReference type="ChEBI" id="CHEBI:58017"/>
        <note>ligand shared between dimeric partners</note>
    </ligand>
</feature>
<feature type="binding site" evidence="1">
    <location>
        <position position="98"/>
    </location>
    <ligand>
        <name>5-phospho-alpha-D-ribose 1-diphosphate</name>
        <dbReference type="ChEBI" id="CHEBI:58017"/>
        <note>ligand shared between dimeric partners</note>
    </ligand>
</feature>
<feature type="binding site" description="in other chain" evidence="1">
    <location>
        <position position="99"/>
    </location>
    <ligand>
        <name>5-phospho-alpha-D-ribose 1-diphosphate</name>
        <dbReference type="ChEBI" id="CHEBI:58017"/>
        <note>ligand shared between dimeric partners</note>
    </ligand>
</feature>
<feature type="binding site" evidence="1">
    <location>
        <position position="102"/>
    </location>
    <ligand>
        <name>5-phospho-alpha-D-ribose 1-diphosphate</name>
        <dbReference type="ChEBI" id="CHEBI:58017"/>
        <note>ligand shared between dimeric partners</note>
    </ligand>
</feature>
<feature type="binding site" evidence="1">
    <location>
        <position position="104"/>
    </location>
    <ligand>
        <name>5-phospho-alpha-D-ribose 1-diphosphate</name>
        <dbReference type="ChEBI" id="CHEBI:58017"/>
        <note>ligand shared between dimeric partners</note>
    </ligand>
</feature>
<feature type="binding site" description="in other chain" evidence="1">
    <location>
        <begin position="123"/>
        <end position="131"/>
    </location>
    <ligand>
        <name>5-phospho-alpha-D-ribose 1-diphosphate</name>
        <dbReference type="ChEBI" id="CHEBI:58017"/>
        <note>ligand shared between dimeric partners</note>
    </ligand>
</feature>
<feature type="binding site" evidence="1">
    <location>
        <position position="127"/>
    </location>
    <ligand>
        <name>orotate</name>
        <dbReference type="ChEBI" id="CHEBI:30839"/>
    </ligand>
</feature>
<feature type="binding site" evidence="1">
    <location>
        <position position="155"/>
    </location>
    <ligand>
        <name>orotate</name>
        <dbReference type="ChEBI" id="CHEBI:30839"/>
    </ligand>
</feature>
<reference key="1">
    <citation type="journal article" date="2003" name="J. Bacteriol.">
        <title>Complete genome sequence of the ammonia-oxidizing bacterium and obligate chemolithoautotroph Nitrosomonas europaea.</title>
        <authorList>
            <person name="Chain P."/>
            <person name="Lamerdin J.E."/>
            <person name="Larimer F.W."/>
            <person name="Regala W."/>
            <person name="Lao V."/>
            <person name="Land M.L."/>
            <person name="Hauser L."/>
            <person name="Hooper A.B."/>
            <person name="Klotz M.G."/>
            <person name="Norton J."/>
            <person name="Sayavedra-Soto L.A."/>
            <person name="Arciero D.M."/>
            <person name="Hommes N.G."/>
            <person name="Whittaker M.M."/>
            <person name="Arp D.J."/>
        </authorList>
    </citation>
    <scope>NUCLEOTIDE SEQUENCE [LARGE SCALE GENOMIC DNA]</scope>
    <source>
        <strain>ATCC 19718 / CIP 103999 / KCTC 2705 / NBRC 14298</strain>
    </source>
</reference>